<protein>
    <recommendedName>
        <fullName evidence="1">Thiamine-phosphate synthase</fullName>
        <shortName evidence="1">TP synthase</shortName>
        <shortName evidence="1">TPS</shortName>
        <ecNumber evidence="1">2.5.1.3</ecNumber>
    </recommendedName>
    <alternativeName>
        <fullName evidence="1">Thiamine-phosphate pyrophosphorylase</fullName>
        <shortName evidence="1">TMP pyrophosphorylase</shortName>
        <shortName evidence="1">TMP-PPase</shortName>
    </alternativeName>
</protein>
<proteinExistence type="inferred from homology"/>
<dbReference type="EC" id="2.5.1.3" evidence="1"/>
<dbReference type="EMBL" id="CP000088">
    <property type="protein sequence ID" value="AAZ55084.1"/>
    <property type="molecule type" value="Genomic_DNA"/>
</dbReference>
<dbReference type="RefSeq" id="WP_011291493.1">
    <property type="nucleotide sequence ID" value="NC_007333.1"/>
</dbReference>
<dbReference type="SMR" id="Q47R33"/>
<dbReference type="STRING" id="269800.Tfu_1046"/>
<dbReference type="KEGG" id="tfu:Tfu_1046"/>
<dbReference type="eggNOG" id="COG0352">
    <property type="taxonomic scope" value="Bacteria"/>
</dbReference>
<dbReference type="HOGENOM" id="CLU_018272_3_0_11"/>
<dbReference type="OrthoDB" id="3243336at2"/>
<dbReference type="UniPathway" id="UPA00060">
    <property type="reaction ID" value="UER00141"/>
</dbReference>
<dbReference type="GO" id="GO:0005737">
    <property type="term" value="C:cytoplasm"/>
    <property type="evidence" value="ECO:0007669"/>
    <property type="project" value="TreeGrafter"/>
</dbReference>
<dbReference type="GO" id="GO:0000287">
    <property type="term" value="F:magnesium ion binding"/>
    <property type="evidence" value="ECO:0007669"/>
    <property type="project" value="UniProtKB-UniRule"/>
</dbReference>
<dbReference type="GO" id="GO:0004789">
    <property type="term" value="F:thiamine-phosphate diphosphorylase activity"/>
    <property type="evidence" value="ECO:0007669"/>
    <property type="project" value="UniProtKB-UniRule"/>
</dbReference>
<dbReference type="GO" id="GO:0009228">
    <property type="term" value="P:thiamine biosynthetic process"/>
    <property type="evidence" value="ECO:0007669"/>
    <property type="project" value="UniProtKB-KW"/>
</dbReference>
<dbReference type="GO" id="GO:0009229">
    <property type="term" value="P:thiamine diphosphate biosynthetic process"/>
    <property type="evidence" value="ECO:0007669"/>
    <property type="project" value="UniProtKB-UniRule"/>
</dbReference>
<dbReference type="CDD" id="cd00564">
    <property type="entry name" value="TMP_TenI"/>
    <property type="match status" value="1"/>
</dbReference>
<dbReference type="FunFam" id="3.20.20.70:FF:000178">
    <property type="entry name" value="Thiamine-phosphate synthase"/>
    <property type="match status" value="1"/>
</dbReference>
<dbReference type="Gene3D" id="3.20.20.70">
    <property type="entry name" value="Aldolase class I"/>
    <property type="match status" value="1"/>
</dbReference>
<dbReference type="HAMAP" id="MF_00097">
    <property type="entry name" value="TMP_synthase"/>
    <property type="match status" value="1"/>
</dbReference>
<dbReference type="InterPro" id="IPR013785">
    <property type="entry name" value="Aldolase_TIM"/>
</dbReference>
<dbReference type="InterPro" id="IPR036206">
    <property type="entry name" value="ThiamineP_synth_sf"/>
</dbReference>
<dbReference type="InterPro" id="IPR022998">
    <property type="entry name" value="ThiamineP_synth_TenI"/>
</dbReference>
<dbReference type="InterPro" id="IPR034291">
    <property type="entry name" value="TMP_synthase"/>
</dbReference>
<dbReference type="NCBIfam" id="TIGR00693">
    <property type="entry name" value="thiE"/>
    <property type="match status" value="1"/>
</dbReference>
<dbReference type="PANTHER" id="PTHR20857">
    <property type="entry name" value="THIAMINE-PHOSPHATE PYROPHOSPHORYLASE"/>
    <property type="match status" value="1"/>
</dbReference>
<dbReference type="PANTHER" id="PTHR20857:SF15">
    <property type="entry name" value="THIAMINE-PHOSPHATE SYNTHASE"/>
    <property type="match status" value="1"/>
</dbReference>
<dbReference type="Pfam" id="PF02581">
    <property type="entry name" value="TMP-TENI"/>
    <property type="match status" value="1"/>
</dbReference>
<dbReference type="SUPFAM" id="SSF51391">
    <property type="entry name" value="Thiamin phosphate synthase"/>
    <property type="match status" value="1"/>
</dbReference>
<accession>Q47R33</accession>
<sequence>MDETLRKRLESARLYLCTDARADRGDLAEFLDAALAGGVDIVQLRDKTLDARDELAALEVVREACDRHGALLAVNDRADIAHAVNADVLHLGQRDLPVRYARAILGDRPLIGRSTNAAELSAAADREEGVDYFCIGPVWATPTKPGRPAAGLDEVARVAALHPQRPWFAIGGINEDNLDQVLAAGARRAVVVRAITEAEDPRAAAAELKRRLVAAAAA</sequence>
<reference key="1">
    <citation type="journal article" date="2007" name="J. Bacteriol.">
        <title>Genome sequence and analysis of the soil cellulolytic actinomycete Thermobifida fusca YX.</title>
        <authorList>
            <person name="Lykidis A."/>
            <person name="Mavromatis K."/>
            <person name="Ivanova N."/>
            <person name="Anderson I."/>
            <person name="Land M."/>
            <person name="DiBartolo G."/>
            <person name="Martinez M."/>
            <person name="Lapidus A."/>
            <person name="Lucas S."/>
            <person name="Copeland A."/>
            <person name="Richardson P."/>
            <person name="Wilson D.B."/>
            <person name="Kyrpides N."/>
        </authorList>
    </citation>
    <scope>NUCLEOTIDE SEQUENCE [LARGE SCALE GENOMIC DNA]</scope>
    <source>
        <strain>YX</strain>
    </source>
</reference>
<gene>
    <name evidence="1" type="primary">thiE</name>
    <name type="ordered locus">Tfu_1046</name>
</gene>
<organism>
    <name type="scientific">Thermobifida fusca (strain YX)</name>
    <dbReference type="NCBI Taxonomy" id="269800"/>
    <lineage>
        <taxon>Bacteria</taxon>
        <taxon>Bacillati</taxon>
        <taxon>Actinomycetota</taxon>
        <taxon>Actinomycetes</taxon>
        <taxon>Streptosporangiales</taxon>
        <taxon>Nocardiopsidaceae</taxon>
        <taxon>Thermobifida</taxon>
    </lineage>
</organism>
<keyword id="KW-0460">Magnesium</keyword>
<keyword id="KW-0479">Metal-binding</keyword>
<keyword id="KW-0784">Thiamine biosynthesis</keyword>
<keyword id="KW-0808">Transferase</keyword>
<feature type="chain" id="PRO_1000008181" description="Thiamine-phosphate synthase">
    <location>
        <begin position="1"/>
        <end position="218"/>
    </location>
</feature>
<feature type="binding site" evidence="1">
    <location>
        <begin position="43"/>
        <end position="47"/>
    </location>
    <ligand>
        <name>4-amino-2-methyl-5-(diphosphooxymethyl)pyrimidine</name>
        <dbReference type="ChEBI" id="CHEBI:57841"/>
    </ligand>
</feature>
<feature type="binding site" evidence="1">
    <location>
        <position position="75"/>
    </location>
    <ligand>
        <name>4-amino-2-methyl-5-(diphosphooxymethyl)pyrimidine</name>
        <dbReference type="ChEBI" id="CHEBI:57841"/>
    </ligand>
</feature>
<feature type="binding site" evidence="1">
    <location>
        <position position="76"/>
    </location>
    <ligand>
        <name>Mg(2+)</name>
        <dbReference type="ChEBI" id="CHEBI:18420"/>
    </ligand>
</feature>
<feature type="binding site" evidence="1">
    <location>
        <position position="95"/>
    </location>
    <ligand>
        <name>Mg(2+)</name>
        <dbReference type="ChEBI" id="CHEBI:18420"/>
    </ligand>
</feature>
<feature type="binding site" evidence="1">
    <location>
        <position position="114"/>
    </location>
    <ligand>
        <name>4-amino-2-methyl-5-(diphosphooxymethyl)pyrimidine</name>
        <dbReference type="ChEBI" id="CHEBI:57841"/>
    </ligand>
</feature>
<feature type="binding site" evidence="1">
    <location>
        <begin position="141"/>
        <end position="143"/>
    </location>
    <ligand>
        <name>2-[(2R,5Z)-2-carboxy-4-methylthiazol-5(2H)-ylidene]ethyl phosphate</name>
        <dbReference type="ChEBI" id="CHEBI:62899"/>
    </ligand>
</feature>
<feature type="binding site" evidence="1">
    <location>
        <position position="144"/>
    </location>
    <ligand>
        <name>4-amino-2-methyl-5-(diphosphooxymethyl)pyrimidine</name>
        <dbReference type="ChEBI" id="CHEBI:57841"/>
    </ligand>
</feature>
<feature type="binding site" evidence="1">
    <location>
        <position position="172"/>
    </location>
    <ligand>
        <name>2-[(2R,5Z)-2-carboxy-4-methylthiazol-5(2H)-ylidene]ethyl phosphate</name>
        <dbReference type="ChEBI" id="CHEBI:62899"/>
    </ligand>
</feature>
<evidence type="ECO:0000255" key="1">
    <source>
        <dbReference type="HAMAP-Rule" id="MF_00097"/>
    </source>
</evidence>
<comment type="function">
    <text evidence="1">Condenses 4-methyl-5-(beta-hydroxyethyl)thiazole monophosphate (THZ-P) and 2-methyl-4-amino-5-hydroxymethyl pyrimidine pyrophosphate (HMP-PP) to form thiamine monophosphate (TMP).</text>
</comment>
<comment type="catalytic activity">
    <reaction evidence="1">
        <text>2-[(2R,5Z)-2-carboxy-4-methylthiazol-5(2H)-ylidene]ethyl phosphate + 4-amino-2-methyl-5-(diphosphooxymethyl)pyrimidine + 2 H(+) = thiamine phosphate + CO2 + diphosphate</text>
        <dbReference type="Rhea" id="RHEA:47844"/>
        <dbReference type="ChEBI" id="CHEBI:15378"/>
        <dbReference type="ChEBI" id="CHEBI:16526"/>
        <dbReference type="ChEBI" id="CHEBI:33019"/>
        <dbReference type="ChEBI" id="CHEBI:37575"/>
        <dbReference type="ChEBI" id="CHEBI:57841"/>
        <dbReference type="ChEBI" id="CHEBI:62899"/>
        <dbReference type="EC" id="2.5.1.3"/>
    </reaction>
</comment>
<comment type="catalytic activity">
    <reaction evidence="1">
        <text>2-(2-carboxy-4-methylthiazol-5-yl)ethyl phosphate + 4-amino-2-methyl-5-(diphosphooxymethyl)pyrimidine + 2 H(+) = thiamine phosphate + CO2 + diphosphate</text>
        <dbReference type="Rhea" id="RHEA:47848"/>
        <dbReference type="ChEBI" id="CHEBI:15378"/>
        <dbReference type="ChEBI" id="CHEBI:16526"/>
        <dbReference type="ChEBI" id="CHEBI:33019"/>
        <dbReference type="ChEBI" id="CHEBI:37575"/>
        <dbReference type="ChEBI" id="CHEBI:57841"/>
        <dbReference type="ChEBI" id="CHEBI:62890"/>
        <dbReference type="EC" id="2.5.1.3"/>
    </reaction>
</comment>
<comment type="catalytic activity">
    <reaction evidence="1">
        <text>4-methyl-5-(2-phosphooxyethyl)-thiazole + 4-amino-2-methyl-5-(diphosphooxymethyl)pyrimidine + H(+) = thiamine phosphate + diphosphate</text>
        <dbReference type="Rhea" id="RHEA:22328"/>
        <dbReference type="ChEBI" id="CHEBI:15378"/>
        <dbReference type="ChEBI" id="CHEBI:33019"/>
        <dbReference type="ChEBI" id="CHEBI:37575"/>
        <dbReference type="ChEBI" id="CHEBI:57841"/>
        <dbReference type="ChEBI" id="CHEBI:58296"/>
        <dbReference type="EC" id="2.5.1.3"/>
    </reaction>
</comment>
<comment type="cofactor">
    <cofactor evidence="1">
        <name>Mg(2+)</name>
        <dbReference type="ChEBI" id="CHEBI:18420"/>
    </cofactor>
    <text evidence="1">Binds 1 Mg(2+) ion per subunit.</text>
</comment>
<comment type="pathway">
    <text evidence="1">Cofactor biosynthesis; thiamine diphosphate biosynthesis; thiamine phosphate from 4-amino-2-methyl-5-diphosphomethylpyrimidine and 4-methyl-5-(2-phosphoethyl)-thiazole: step 1/1.</text>
</comment>
<comment type="similarity">
    <text evidence="1">Belongs to the thiamine-phosphate synthase family.</text>
</comment>
<name>THIE_THEFY</name>